<proteinExistence type="inferred from homology"/>
<sequence>MLIKDTIFYRPDWRWHIFLKYLTNNLSKYNCLEKIIPSEYSYKDSTYGSKKSKKNVNLCTWGVTHKKRIQFARAVCINSPKYSVLNFLIIPNTIYNVPFFGVDFVSLPNIYLLVLDFQPSLKIQNQYNNQLLEKLIKLKNHCHSSLPLAEEMSVDVARFFSPGAIWSKLPKEERSDFLIANQLYTSFKEYLDLYLEILFESKEVNIDLQKELINGQNNYLNYRRDNDPARPMLSSLFGKEFTESLIKEVLFTT</sequence>
<organism>
    <name type="scientific">Prochlorococcus marinus (strain MIT 9215)</name>
    <dbReference type="NCBI Taxonomy" id="93060"/>
    <lineage>
        <taxon>Bacteria</taxon>
        <taxon>Bacillati</taxon>
        <taxon>Cyanobacteriota</taxon>
        <taxon>Cyanophyceae</taxon>
        <taxon>Synechococcales</taxon>
        <taxon>Prochlorococcaceae</taxon>
        <taxon>Prochlorococcus</taxon>
    </lineage>
</organism>
<accession>A8G797</accession>
<feature type="chain" id="PRO_1000148508" description="Phycoerythrobilin:ferredoxin oxidoreductase">
    <location>
        <begin position="1"/>
        <end position="253"/>
    </location>
</feature>
<dbReference type="EC" id="1.3.7.3"/>
<dbReference type="EMBL" id="CP000825">
    <property type="protein sequence ID" value="ABV51478.1"/>
    <property type="molecule type" value="Genomic_DNA"/>
</dbReference>
<dbReference type="RefSeq" id="WP_012008479.1">
    <property type="nucleotide sequence ID" value="NC_009840.1"/>
</dbReference>
<dbReference type="SMR" id="A8G797"/>
<dbReference type="STRING" id="93060.P9215_18651"/>
<dbReference type="KEGG" id="pmh:P9215_18651"/>
<dbReference type="eggNOG" id="ENOG502Z8GK">
    <property type="taxonomic scope" value="Bacteria"/>
</dbReference>
<dbReference type="HOGENOM" id="CLU_086208_1_0_3"/>
<dbReference type="OrthoDB" id="421401at2"/>
<dbReference type="Proteomes" id="UP000002014">
    <property type="component" value="Chromosome"/>
</dbReference>
<dbReference type="GO" id="GO:0050897">
    <property type="term" value="F:cobalt ion binding"/>
    <property type="evidence" value="ECO:0007669"/>
    <property type="project" value="InterPro"/>
</dbReference>
<dbReference type="GO" id="GO:0050618">
    <property type="term" value="F:phycoerythrobilin:ferredoxin oxidoreductase activity"/>
    <property type="evidence" value="ECO:0007669"/>
    <property type="project" value="UniProtKB-UniRule"/>
</dbReference>
<dbReference type="GO" id="GO:0010024">
    <property type="term" value="P:phytochromobilin biosynthetic process"/>
    <property type="evidence" value="ECO:0007669"/>
    <property type="project" value="InterPro"/>
</dbReference>
<dbReference type="Gene3D" id="3.40.1500.20">
    <property type="match status" value="1"/>
</dbReference>
<dbReference type="InterPro" id="IPR009249">
    <property type="entry name" value="Ferredoxin-dep_bilin_Rdtase"/>
</dbReference>
<dbReference type="InterPro" id="IPR022827">
    <property type="entry name" value="Phycoerythrobilin_Fdx_Rdtase"/>
</dbReference>
<dbReference type="NCBIfam" id="NF009721">
    <property type="entry name" value="PRK13248.1"/>
    <property type="match status" value="1"/>
</dbReference>
<dbReference type="PANTHER" id="PTHR34557">
    <property type="entry name" value="PHYTOCHROMOBILIN:FERREDOXIN OXIDOREDUCTASE, CHLOROPLASTIC"/>
    <property type="match status" value="1"/>
</dbReference>
<dbReference type="PANTHER" id="PTHR34557:SF1">
    <property type="entry name" value="PHYTOCHROMOBILIN:FERREDOXIN OXIDOREDUCTASE, CHLOROPLASTIC"/>
    <property type="match status" value="1"/>
</dbReference>
<dbReference type="Pfam" id="PF05996">
    <property type="entry name" value="Fe_bilin_red"/>
    <property type="match status" value="1"/>
</dbReference>
<reference key="1">
    <citation type="journal article" date="2007" name="PLoS Genet.">
        <title>Patterns and implications of gene gain and loss in the evolution of Prochlorococcus.</title>
        <authorList>
            <person name="Kettler G.C."/>
            <person name="Martiny A.C."/>
            <person name="Huang K."/>
            <person name="Zucker J."/>
            <person name="Coleman M.L."/>
            <person name="Rodrigue S."/>
            <person name="Chen F."/>
            <person name="Lapidus A."/>
            <person name="Ferriera S."/>
            <person name="Johnson J."/>
            <person name="Steglich C."/>
            <person name="Church G.M."/>
            <person name="Richardson P."/>
            <person name="Chisholm S.W."/>
        </authorList>
    </citation>
    <scope>NUCLEOTIDE SEQUENCE [LARGE SCALE GENOMIC DNA]</scope>
    <source>
        <strain>MIT 9215</strain>
    </source>
</reference>
<comment type="function">
    <text evidence="1">Catalyzes the two-electron reduction of the C2 and C3(1) diene system of 15,16-dihydrobiliverdin.</text>
</comment>
<comment type="catalytic activity">
    <reaction>
        <text>(3Z)-phycoerythrobilin + oxidized 2[4Fe-4S]-[ferredoxin] = 15,16-dihydrobiliverdin + reduced 2[4Fe-4S]-[ferredoxin] + 2 H(+)</text>
        <dbReference type="Rhea" id="RHEA:22092"/>
        <dbReference type="Rhea" id="RHEA-COMP:10002"/>
        <dbReference type="Rhea" id="RHEA-COMP:10004"/>
        <dbReference type="ChEBI" id="CHEBI:15378"/>
        <dbReference type="ChEBI" id="CHEBI:33722"/>
        <dbReference type="ChEBI" id="CHEBI:33723"/>
        <dbReference type="ChEBI" id="CHEBI:57438"/>
        <dbReference type="ChEBI" id="CHEBI:57899"/>
        <dbReference type="EC" id="1.3.7.3"/>
    </reaction>
</comment>
<comment type="similarity">
    <text evidence="2">Belongs to the HY2 family.</text>
</comment>
<evidence type="ECO:0000250" key="1"/>
<evidence type="ECO:0000305" key="2"/>
<name>PEBB_PROM2</name>
<keyword id="KW-0560">Oxidoreductase</keyword>
<protein>
    <recommendedName>
        <fullName>Phycoerythrobilin:ferredoxin oxidoreductase</fullName>
        <ecNumber>1.3.7.3</ecNumber>
    </recommendedName>
</protein>
<gene>
    <name type="primary">pebB</name>
    <name type="ordered locus">P9215_18651</name>
</gene>